<name>PKP4_MOUSE</name>
<feature type="chain" id="PRO_0000064290" description="Plakophilin-4">
    <location>
        <begin position="1"/>
        <end position="1190"/>
    </location>
</feature>
<feature type="repeat" description="ARM 1">
    <location>
        <begin position="517"/>
        <end position="556"/>
    </location>
</feature>
<feature type="repeat" description="ARM 2">
    <location>
        <begin position="559"/>
        <end position="598"/>
    </location>
</feature>
<feature type="repeat" description="ARM 3">
    <location>
        <begin position="603"/>
        <end position="643"/>
    </location>
</feature>
<feature type="repeat" description="ARM 4">
    <location>
        <begin position="861"/>
        <end position="900"/>
    </location>
</feature>
<feature type="region of interest" description="Disordered" evidence="4">
    <location>
        <begin position="1"/>
        <end position="32"/>
    </location>
</feature>
<feature type="region of interest" description="Disordered" evidence="4">
    <location>
        <begin position="73"/>
        <end position="347"/>
    </location>
</feature>
<feature type="region of interest" description="Disordered" evidence="4">
    <location>
        <begin position="772"/>
        <end position="809"/>
    </location>
</feature>
<feature type="coiled-coil region" evidence="3">
    <location>
        <begin position="36"/>
        <end position="63"/>
    </location>
</feature>
<feature type="compositionally biased region" description="Polar residues" evidence="4">
    <location>
        <begin position="77"/>
        <end position="86"/>
    </location>
</feature>
<feature type="compositionally biased region" description="Polar residues" evidence="4">
    <location>
        <begin position="138"/>
        <end position="156"/>
    </location>
</feature>
<feature type="compositionally biased region" description="Polar residues" evidence="4">
    <location>
        <begin position="163"/>
        <end position="203"/>
    </location>
</feature>
<feature type="compositionally biased region" description="Polar residues" evidence="4">
    <location>
        <begin position="213"/>
        <end position="229"/>
    </location>
</feature>
<feature type="compositionally biased region" description="Low complexity" evidence="4">
    <location>
        <begin position="230"/>
        <end position="241"/>
    </location>
</feature>
<feature type="compositionally biased region" description="Polar residues" evidence="4">
    <location>
        <begin position="247"/>
        <end position="266"/>
    </location>
</feature>
<feature type="compositionally biased region" description="Polar residues" evidence="4">
    <location>
        <begin position="289"/>
        <end position="323"/>
    </location>
</feature>
<feature type="compositionally biased region" description="Low complexity" evidence="4">
    <location>
        <begin position="324"/>
        <end position="337"/>
    </location>
</feature>
<feature type="compositionally biased region" description="Basic and acidic residues" evidence="4">
    <location>
        <begin position="772"/>
        <end position="781"/>
    </location>
</feature>
<feature type="modified residue" description="Phosphoserine" evidence="2">
    <location>
        <position position="75"/>
    </location>
</feature>
<feature type="modified residue" description="Phosphothreonine" evidence="10">
    <location>
        <position position="84"/>
    </location>
</feature>
<feature type="modified residue" description="Phosphoserine" evidence="2">
    <location>
        <position position="106"/>
    </location>
</feature>
<feature type="modified residue" description="Phosphoserine" evidence="10">
    <location>
        <position position="132"/>
    </location>
</feature>
<feature type="modified residue" description="Phosphoserine" evidence="10">
    <location>
        <position position="136"/>
    </location>
</feature>
<feature type="modified residue" description="Phosphoserine" evidence="10">
    <location>
        <position position="139"/>
    </location>
</feature>
<feature type="modified residue" description="Phosphoserine" evidence="10">
    <location>
        <position position="220"/>
    </location>
</feature>
<feature type="modified residue" description="Phosphoserine" evidence="10">
    <location>
        <position position="230"/>
    </location>
</feature>
<feature type="modified residue" description="Phosphoserine" evidence="2">
    <location>
        <position position="235"/>
    </location>
</feature>
<feature type="modified residue" description="Omega-N-methylarginine" evidence="11">
    <location>
        <position position="253"/>
    </location>
</feature>
<feature type="modified residue" description="Omega-N-methylarginine" evidence="11">
    <location>
        <position position="269"/>
    </location>
</feature>
<feature type="modified residue" description="Phosphoserine" evidence="2">
    <location>
        <position position="272"/>
    </location>
</feature>
<feature type="modified residue" description="Phosphoserine" evidence="10">
    <location>
        <position position="280"/>
    </location>
</feature>
<feature type="modified residue" description="Phosphoserine" evidence="8 10">
    <location>
        <position position="313"/>
    </location>
</feature>
<feature type="modified residue" description="Phosphoserine" evidence="10">
    <location>
        <position position="326"/>
    </location>
</feature>
<feature type="modified residue" description="Phosphoserine" evidence="10">
    <location>
        <position position="336"/>
    </location>
</feature>
<feature type="modified residue" description="Phosphotyrosine" evidence="9">
    <location>
        <position position="371"/>
    </location>
</feature>
<feature type="modified residue" description="Phosphoserine" evidence="2">
    <location>
        <position position="391"/>
    </location>
</feature>
<feature type="modified residue" description="Phosphoserine" evidence="10">
    <location>
        <position position="402"/>
    </location>
</feature>
<feature type="modified residue" description="Phosphoserine" evidence="8 10">
    <location>
        <position position="405"/>
    </location>
</feature>
<feature type="modified residue" description="Phosphothreonine" evidence="10">
    <location>
        <position position="411"/>
    </location>
</feature>
<feature type="modified residue" description="Phosphotyrosine" evidence="2">
    <location>
        <position position="414"/>
    </location>
</feature>
<feature type="modified residue" description="Phosphoserine" evidence="10">
    <location>
        <position position="421"/>
    </location>
</feature>
<feature type="modified residue" description="Phosphoserine" evidence="10">
    <location>
        <position position="426"/>
    </location>
</feature>
<feature type="modified residue" description="Phosphoserine" evidence="10">
    <location>
        <position position="437"/>
    </location>
</feature>
<feature type="modified residue" description="Phosphotyrosine" evidence="9">
    <location>
        <position position="477"/>
    </location>
</feature>
<feature type="modified residue" description="Phosphoserine" evidence="10">
    <location>
        <position position="509"/>
    </location>
</feature>
<feature type="modified residue" description="Phosphoserine" evidence="10">
    <location>
        <position position="511"/>
    </location>
</feature>
<feature type="modified residue" description="Phosphoserine" evidence="10">
    <location>
        <position position="514"/>
    </location>
</feature>
<feature type="modified residue" description="Phosphoserine" evidence="10">
    <location>
        <position position="775"/>
    </location>
</feature>
<feature type="modified residue" description="Phosphothreonine" evidence="10">
    <location>
        <position position="1012"/>
    </location>
</feature>
<feature type="modified residue" description="Phosphothreonine" evidence="10">
    <location>
        <position position="1016"/>
    </location>
</feature>
<feature type="modified residue" description="Phosphoserine" evidence="10">
    <location>
        <position position="1044"/>
    </location>
</feature>
<feature type="modified residue" description="Phosphoserine" evidence="10">
    <location>
        <position position="1090"/>
    </location>
</feature>
<feature type="modified residue" description="Phosphoserine" evidence="10">
    <location>
        <position position="1099"/>
    </location>
</feature>
<feature type="modified residue" description="Phosphoserine" evidence="8 10">
    <location>
        <position position="1133"/>
    </location>
</feature>
<feature type="splice variant" id="VSP_012374" description="In isoform 3." evidence="6">
    <location>
        <begin position="1"/>
        <end position="341"/>
    </location>
</feature>
<feature type="splice variant" id="VSP_012375" description="In isoform 3." evidence="6">
    <original>V</original>
    <variation>G</variation>
    <location>
        <position position="637"/>
    </location>
</feature>
<feature type="splice variant" id="VSP_012376" description="In isoform 3." evidence="6">
    <location>
        <begin position="638"/>
        <end position="1190"/>
    </location>
</feature>
<feature type="splice variant" id="VSP_012377" description="In isoform 2." evidence="5">
    <location>
        <begin position="1042"/>
        <end position="1084"/>
    </location>
</feature>
<feature type="sequence conflict" description="In Ref. 2; AAH78638." evidence="7" ref="2">
    <original>S</original>
    <variation>F</variation>
    <location>
        <position position="328"/>
    </location>
</feature>
<feature type="sequence conflict" description="In Ref. 3; BAC36708." evidence="7" ref="3">
    <original>V</original>
    <variation>A</variation>
    <location>
        <position position="877"/>
    </location>
</feature>
<feature type="sequence conflict" description="In Ref. 3; BAC36708." evidence="7" ref="3">
    <original>D</original>
    <variation>G</variation>
    <location>
        <position position="1118"/>
    </location>
</feature>
<feature type="sequence conflict" description="In Ref. 3; BAB32313." evidence="7" ref="3">
    <original>K</original>
    <variation>R</variation>
    <location>
        <position position="1161"/>
    </location>
</feature>
<comment type="function">
    <text evidence="1">Plays a role as a regulator of Rho activity during cytokinesis. May play a role in junctional plaques (By similarity).</text>
</comment>
<comment type="subunit">
    <text evidence="2">Interacts (via the C-terminus) with FRMPD2 (via the PDZ 2 domain). Interacts with PDZD2. Interacts with RHOA; the interaction is detected at the midbody. Interacts with ECT2; the interaction is detected at the midbody (By similarity). Interacts with CCDC85B (By similarity).</text>
</comment>
<comment type="subcellular location">
    <subcellularLocation>
        <location evidence="1">Cell junction</location>
        <location evidence="1">Desmosome</location>
    </subcellularLocation>
    <subcellularLocation>
        <location evidence="1">Cytoplasm</location>
        <location evidence="1">Cytoskeleton</location>
        <location evidence="1">Spindle</location>
    </subcellularLocation>
    <subcellularLocation>
        <location evidence="1">Cytoplasm</location>
        <location evidence="1">Cytoskeleton</location>
        <location evidence="1">Spindle pole</location>
    </subcellularLocation>
    <subcellularLocation>
        <location evidence="1">Midbody</location>
    </subcellularLocation>
    <subcellularLocation>
        <location evidence="1">Cell membrane</location>
        <topology evidence="1">Peripheral membrane protein</topology>
    </subcellularLocation>
    <text evidence="1">Associated with the pericentrosomal region in interphase and with spindle poles during mitosis. In anaphase, during chromosome segregation, is recruited to the central microtubule bundle, focussed at the spindle midzone and ultimately localizes to the midbody at cytokinesis. Constituent of the midbody cytoskeletal matrix. Colocalized with desmoplakin at desmosomal junctional plaques in cultured epithelial cells (By similarity).</text>
</comment>
<comment type="alternative products">
    <event type="alternative splicing"/>
    <isoform>
        <id>Q68FH0-1</id>
        <name>1</name>
        <sequence type="displayed"/>
    </isoform>
    <isoform>
        <id>Q68FH0-2</id>
        <name>2</name>
        <sequence type="described" ref="VSP_012377"/>
    </isoform>
    <isoform>
        <id>Q68FH0-3</id>
        <name>3</name>
        <sequence type="described" ref="VSP_012374 VSP_012375 VSP_012376"/>
    </isoform>
</comment>
<comment type="similarity">
    <text evidence="7">Belongs to the beta-catenin family.</text>
</comment>
<comment type="sequence caution" evidence="7">
    <conflict type="erroneous initiation">
        <sequence resource="EMBL-CDS" id="BAC37187"/>
    </conflict>
    <text>Truncated N-terminus.</text>
</comment>
<gene>
    <name type="primary">Pkp4</name>
    <name type="synonym">Armrp</name>
</gene>
<reference key="1">
    <citation type="journal article" date="2009" name="PLoS Biol.">
        <title>Lineage-specific biology revealed by a finished genome assembly of the mouse.</title>
        <authorList>
            <person name="Church D.M."/>
            <person name="Goodstadt L."/>
            <person name="Hillier L.W."/>
            <person name="Zody M.C."/>
            <person name="Goldstein S."/>
            <person name="She X."/>
            <person name="Bult C.J."/>
            <person name="Agarwala R."/>
            <person name="Cherry J.L."/>
            <person name="DiCuccio M."/>
            <person name="Hlavina W."/>
            <person name="Kapustin Y."/>
            <person name="Meric P."/>
            <person name="Maglott D."/>
            <person name="Birtle Z."/>
            <person name="Marques A.C."/>
            <person name="Graves T."/>
            <person name="Zhou S."/>
            <person name="Teague B."/>
            <person name="Potamousis K."/>
            <person name="Churas C."/>
            <person name="Place M."/>
            <person name="Herschleb J."/>
            <person name="Runnheim R."/>
            <person name="Forrest D."/>
            <person name="Amos-Landgraf J."/>
            <person name="Schwartz D.C."/>
            <person name="Cheng Z."/>
            <person name="Lindblad-Toh K."/>
            <person name="Eichler E.E."/>
            <person name="Ponting C.P."/>
        </authorList>
    </citation>
    <scope>NUCLEOTIDE SEQUENCE [LARGE SCALE GENOMIC DNA]</scope>
    <source>
        <strain>C57BL/6J</strain>
    </source>
</reference>
<reference key="2">
    <citation type="journal article" date="2004" name="Genome Res.">
        <title>The status, quality, and expansion of the NIH full-length cDNA project: the Mammalian Gene Collection (MGC).</title>
        <authorList>
            <consortium name="The MGC Project Team"/>
        </authorList>
    </citation>
    <scope>NUCLEOTIDE SEQUENCE [LARGE SCALE MRNA] (ISOFORMS 1 AND 2)</scope>
    <source>
        <strain>C57BL/6J</strain>
        <strain>Czech II</strain>
        <tissue>Brain</tissue>
        <tissue>Eye</tissue>
        <tissue>Mammary cancer</tissue>
    </source>
</reference>
<reference key="3">
    <citation type="journal article" date="2005" name="Science">
        <title>The transcriptional landscape of the mammalian genome.</title>
        <authorList>
            <person name="Carninci P."/>
            <person name="Kasukawa T."/>
            <person name="Katayama S."/>
            <person name="Gough J."/>
            <person name="Frith M.C."/>
            <person name="Maeda N."/>
            <person name="Oyama R."/>
            <person name="Ravasi T."/>
            <person name="Lenhard B."/>
            <person name="Wells C."/>
            <person name="Kodzius R."/>
            <person name="Shimokawa K."/>
            <person name="Bajic V.B."/>
            <person name="Brenner S.E."/>
            <person name="Batalov S."/>
            <person name="Forrest A.R."/>
            <person name="Zavolan M."/>
            <person name="Davis M.J."/>
            <person name="Wilming L.G."/>
            <person name="Aidinis V."/>
            <person name="Allen J.E."/>
            <person name="Ambesi-Impiombato A."/>
            <person name="Apweiler R."/>
            <person name="Aturaliya R.N."/>
            <person name="Bailey T.L."/>
            <person name="Bansal M."/>
            <person name="Baxter L."/>
            <person name="Beisel K.W."/>
            <person name="Bersano T."/>
            <person name="Bono H."/>
            <person name="Chalk A.M."/>
            <person name="Chiu K.P."/>
            <person name="Choudhary V."/>
            <person name="Christoffels A."/>
            <person name="Clutterbuck D.R."/>
            <person name="Crowe M.L."/>
            <person name="Dalla E."/>
            <person name="Dalrymple B.P."/>
            <person name="de Bono B."/>
            <person name="Della Gatta G."/>
            <person name="di Bernardo D."/>
            <person name="Down T."/>
            <person name="Engstrom P."/>
            <person name="Fagiolini M."/>
            <person name="Faulkner G."/>
            <person name="Fletcher C.F."/>
            <person name="Fukushima T."/>
            <person name="Furuno M."/>
            <person name="Futaki S."/>
            <person name="Gariboldi M."/>
            <person name="Georgii-Hemming P."/>
            <person name="Gingeras T.R."/>
            <person name="Gojobori T."/>
            <person name="Green R.E."/>
            <person name="Gustincich S."/>
            <person name="Harbers M."/>
            <person name="Hayashi Y."/>
            <person name="Hensch T.K."/>
            <person name="Hirokawa N."/>
            <person name="Hill D."/>
            <person name="Huminiecki L."/>
            <person name="Iacono M."/>
            <person name="Ikeo K."/>
            <person name="Iwama A."/>
            <person name="Ishikawa T."/>
            <person name="Jakt M."/>
            <person name="Kanapin A."/>
            <person name="Katoh M."/>
            <person name="Kawasawa Y."/>
            <person name="Kelso J."/>
            <person name="Kitamura H."/>
            <person name="Kitano H."/>
            <person name="Kollias G."/>
            <person name="Krishnan S.P."/>
            <person name="Kruger A."/>
            <person name="Kummerfeld S.K."/>
            <person name="Kurochkin I.V."/>
            <person name="Lareau L.F."/>
            <person name="Lazarevic D."/>
            <person name="Lipovich L."/>
            <person name="Liu J."/>
            <person name="Liuni S."/>
            <person name="McWilliam S."/>
            <person name="Madan Babu M."/>
            <person name="Madera M."/>
            <person name="Marchionni L."/>
            <person name="Matsuda H."/>
            <person name="Matsuzawa S."/>
            <person name="Miki H."/>
            <person name="Mignone F."/>
            <person name="Miyake S."/>
            <person name="Morris K."/>
            <person name="Mottagui-Tabar S."/>
            <person name="Mulder N."/>
            <person name="Nakano N."/>
            <person name="Nakauchi H."/>
            <person name="Ng P."/>
            <person name="Nilsson R."/>
            <person name="Nishiguchi S."/>
            <person name="Nishikawa S."/>
            <person name="Nori F."/>
            <person name="Ohara O."/>
            <person name="Okazaki Y."/>
            <person name="Orlando V."/>
            <person name="Pang K.C."/>
            <person name="Pavan W.J."/>
            <person name="Pavesi G."/>
            <person name="Pesole G."/>
            <person name="Petrovsky N."/>
            <person name="Piazza S."/>
            <person name="Reed J."/>
            <person name="Reid J.F."/>
            <person name="Ring B.Z."/>
            <person name="Ringwald M."/>
            <person name="Rost B."/>
            <person name="Ruan Y."/>
            <person name="Salzberg S.L."/>
            <person name="Sandelin A."/>
            <person name="Schneider C."/>
            <person name="Schoenbach C."/>
            <person name="Sekiguchi K."/>
            <person name="Semple C.A."/>
            <person name="Seno S."/>
            <person name="Sessa L."/>
            <person name="Sheng Y."/>
            <person name="Shibata Y."/>
            <person name="Shimada H."/>
            <person name="Shimada K."/>
            <person name="Silva D."/>
            <person name="Sinclair B."/>
            <person name="Sperling S."/>
            <person name="Stupka E."/>
            <person name="Sugiura K."/>
            <person name="Sultana R."/>
            <person name="Takenaka Y."/>
            <person name="Taki K."/>
            <person name="Tammoja K."/>
            <person name="Tan S.L."/>
            <person name="Tang S."/>
            <person name="Taylor M.S."/>
            <person name="Tegner J."/>
            <person name="Teichmann S.A."/>
            <person name="Ueda H.R."/>
            <person name="van Nimwegen E."/>
            <person name="Verardo R."/>
            <person name="Wei C.L."/>
            <person name="Yagi K."/>
            <person name="Yamanishi H."/>
            <person name="Zabarovsky E."/>
            <person name="Zhu S."/>
            <person name="Zimmer A."/>
            <person name="Hide W."/>
            <person name="Bult C."/>
            <person name="Grimmond S.M."/>
            <person name="Teasdale R.D."/>
            <person name="Liu E.T."/>
            <person name="Brusic V."/>
            <person name="Quackenbush J."/>
            <person name="Wahlestedt C."/>
            <person name="Mattick J.S."/>
            <person name="Hume D.A."/>
            <person name="Kai C."/>
            <person name="Sasaki D."/>
            <person name="Tomaru Y."/>
            <person name="Fukuda S."/>
            <person name="Kanamori-Katayama M."/>
            <person name="Suzuki M."/>
            <person name="Aoki J."/>
            <person name="Arakawa T."/>
            <person name="Iida J."/>
            <person name="Imamura K."/>
            <person name="Itoh M."/>
            <person name="Kato T."/>
            <person name="Kawaji H."/>
            <person name="Kawagashira N."/>
            <person name="Kawashima T."/>
            <person name="Kojima M."/>
            <person name="Kondo S."/>
            <person name="Konno H."/>
            <person name="Nakano K."/>
            <person name="Ninomiya N."/>
            <person name="Nishio T."/>
            <person name="Okada M."/>
            <person name="Plessy C."/>
            <person name="Shibata K."/>
            <person name="Shiraki T."/>
            <person name="Suzuki S."/>
            <person name="Tagami M."/>
            <person name="Waki K."/>
            <person name="Watahiki A."/>
            <person name="Okamura-Oho Y."/>
            <person name="Suzuki H."/>
            <person name="Kawai J."/>
            <person name="Hayashizaki Y."/>
        </authorList>
    </citation>
    <scope>NUCLEOTIDE SEQUENCE [LARGE SCALE MRNA] (ISOFORM 3)</scope>
    <scope>NUCLEOTIDE SEQUENCE [LARGE SCALE MRNA] OF 747-1190 (ISOFORM 1)</scope>
    <source>
        <strain>C57BL/6J</strain>
        <tissue>Olfactory bulb</tissue>
        <tissue>Ovary</tissue>
        <tissue>Uterus</tissue>
    </source>
</reference>
<reference key="4">
    <citation type="journal article" date="2006" name="Mol. Cell. Proteomics">
        <title>Comprehensive identification of phosphorylation sites in postsynaptic density preparations.</title>
        <authorList>
            <person name="Trinidad J.C."/>
            <person name="Specht C.G."/>
            <person name="Thalhammer A."/>
            <person name="Schoepfer R."/>
            <person name="Burlingame A.L."/>
        </authorList>
    </citation>
    <scope>PHOSPHORYLATION [LARGE SCALE ANALYSIS] AT SER-313; SER-405 AND SER-1133</scope>
    <scope>IDENTIFICATION BY MASS SPECTROMETRY [LARGE SCALE ANALYSIS]</scope>
    <source>
        <tissue>Brain</tissue>
    </source>
</reference>
<reference key="5">
    <citation type="journal article" date="2007" name="Mol. Cell. Proteomics">
        <title>Qualitative and quantitative analyses of protein phosphorylation in naive and stimulated mouse synaptosomal preparations.</title>
        <authorList>
            <person name="Munton R.P."/>
            <person name="Tweedie-Cullen R."/>
            <person name="Livingstone-Zatchej M."/>
            <person name="Weinandy F."/>
            <person name="Waidelich M."/>
            <person name="Longo D."/>
            <person name="Gehrig P."/>
            <person name="Potthast F."/>
            <person name="Rutishauser D."/>
            <person name="Gerrits B."/>
            <person name="Panse C."/>
            <person name="Schlapbach R."/>
            <person name="Mansuy I.M."/>
        </authorList>
    </citation>
    <scope>IDENTIFICATION BY MASS SPECTROMETRY [LARGE SCALE ANALYSIS]</scope>
    <source>
        <tissue>Brain cortex</tissue>
    </source>
</reference>
<reference key="6">
    <citation type="journal article" date="2008" name="J. Proteome Res.">
        <title>Large-scale identification and evolution indexing of tyrosine phosphorylation sites from murine brain.</title>
        <authorList>
            <person name="Ballif B.A."/>
            <person name="Carey G.R."/>
            <person name="Sunyaev S.R."/>
            <person name="Gygi S.P."/>
        </authorList>
    </citation>
    <scope>PHOSPHORYLATION [LARGE SCALE ANALYSIS] AT TYR-371 AND TYR-477</scope>
    <scope>IDENTIFICATION BY MASS SPECTROMETRY [LARGE SCALE ANALYSIS]</scope>
    <source>
        <tissue>Brain</tissue>
    </source>
</reference>
<reference key="7">
    <citation type="journal article" date="2010" name="Cell">
        <title>A tissue-specific atlas of mouse protein phosphorylation and expression.</title>
        <authorList>
            <person name="Huttlin E.L."/>
            <person name="Jedrychowski M.P."/>
            <person name="Elias J.E."/>
            <person name="Goswami T."/>
            <person name="Rad R."/>
            <person name="Beausoleil S.A."/>
            <person name="Villen J."/>
            <person name="Haas W."/>
            <person name="Sowa M.E."/>
            <person name="Gygi S.P."/>
        </authorList>
    </citation>
    <scope>PHOSPHORYLATION [LARGE SCALE ANALYSIS] AT THR-84; SER-132; SER-136; SER-139; SER-220; SER-230; SER-280; SER-313; SER-326; SER-336; SER-402; SER-405; THR-411; SER-421; SER-426; SER-437; SER-509; SER-511; SER-514; SER-775; THR-1012; THR-1016; SER-1044; SER-1090; SER-1099 AND SER-1133</scope>
    <scope>IDENTIFICATION BY MASS SPECTROMETRY [LARGE SCALE ANALYSIS]</scope>
    <source>
        <tissue>Brain</tissue>
        <tissue>Brown adipose tissue</tissue>
        <tissue>Heart</tissue>
        <tissue>Kidney</tissue>
        <tissue>Liver</tissue>
        <tissue>Lung</tissue>
        <tissue>Pancreas</tissue>
        <tissue>Spleen</tissue>
        <tissue>Testis</tissue>
    </source>
</reference>
<reference key="8">
    <citation type="journal article" date="2014" name="Mol. Cell. Proteomics">
        <title>Immunoaffinity enrichment and mass spectrometry analysis of protein methylation.</title>
        <authorList>
            <person name="Guo A."/>
            <person name="Gu H."/>
            <person name="Zhou J."/>
            <person name="Mulhern D."/>
            <person name="Wang Y."/>
            <person name="Lee K.A."/>
            <person name="Yang V."/>
            <person name="Aguiar M."/>
            <person name="Kornhauser J."/>
            <person name="Jia X."/>
            <person name="Ren J."/>
            <person name="Beausoleil S.A."/>
            <person name="Silva J.C."/>
            <person name="Vemulapalli V."/>
            <person name="Bedford M.T."/>
            <person name="Comb M.J."/>
        </authorList>
    </citation>
    <scope>METHYLATION [LARGE SCALE ANALYSIS] AT ARG-253 AND ARG-269</scope>
    <scope>IDENTIFICATION BY MASS SPECTROMETRY [LARGE SCALE ANALYSIS]</scope>
    <source>
        <tissue>Brain</tissue>
    </source>
</reference>
<dbReference type="EMBL" id="AL845536">
    <property type="status" value="NOT_ANNOTATED_CDS"/>
    <property type="molecule type" value="Genomic_DNA"/>
</dbReference>
<dbReference type="EMBL" id="BC078638">
    <property type="protein sequence ID" value="AAH78638.1"/>
    <property type="molecule type" value="mRNA"/>
</dbReference>
<dbReference type="EMBL" id="BC079848">
    <property type="protein sequence ID" value="AAH79848.1"/>
    <property type="molecule type" value="mRNA"/>
</dbReference>
<dbReference type="EMBL" id="BC082578">
    <property type="protein sequence ID" value="AAH82578.1"/>
    <property type="molecule type" value="mRNA"/>
</dbReference>
<dbReference type="EMBL" id="AK021168">
    <property type="protein sequence ID" value="BAB32313.1"/>
    <property type="molecule type" value="mRNA"/>
</dbReference>
<dbReference type="EMBL" id="AK077250">
    <property type="protein sequence ID" value="BAC36708.1"/>
    <property type="molecule type" value="mRNA"/>
</dbReference>
<dbReference type="EMBL" id="AK078240">
    <property type="protein sequence ID" value="BAC37187.1"/>
    <property type="status" value="ALT_INIT"/>
    <property type="molecule type" value="mRNA"/>
</dbReference>
<dbReference type="CCDS" id="CCDS16052.1">
    <molecule id="Q68FH0-1"/>
</dbReference>
<dbReference type="CCDS" id="CCDS50588.1">
    <molecule id="Q68FH0-2"/>
</dbReference>
<dbReference type="RefSeq" id="NP_080637.1">
    <molecule id="Q68FH0-1"/>
    <property type="nucleotide sequence ID" value="NM_026361.2"/>
</dbReference>
<dbReference type="RefSeq" id="NP_780673.2">
    <molecule id="Q68FH0-2"/>
    <property type="nucleotide sequence ID" value="NM_175464.2"/>
</dbReference>
<dbReference type="RefSeq" id="XP_006499234.1">
    <property type="nucleotide sequence ID" value="XM_006499171.3"/>
</dbReference>
<dbReference type="SMR" id="Q68FH0"/>
<dbReference type="BioGRID" id="230696">
    <property type="interactions" value="17"/>
</dbReference>
<dbReference type="FunCoup" id="Q68FH0">
    <property type="interactions" value="527"/>
</dbReference>
<dbReference type="IntAct" id="Q68FH0">
    <property type="interactions" value="4"/>
</dbReference>
<dbReference type="MINT" id="Q68FH0"/>
<dbReference type="STRING" id="10090.ENSMUSP00000099815"/>
<dbReference type="GlyGen" id="Q68FH0">
    <property type="glycosylation" value="16 sites, 1 O-linked glycan (16 sites)"/>
</dbReference>
<dbReference type="iPTMnet" id="Q68FH0"/>
<dbReference type="PhosphoSitePlus" id="Q68FH0"/>
<dbReference type="SwissPalm" id="Q68FH0"/>
<dbReference type="PaxDb" id="10090-ENSMUSP00000099815"/>
<dbReference type="PeptideAtlas" id="Q68FH0"/>
<dbReference type="ProteomicsDB" id="289517">
    <molecule id="Q68FH0-1"/>
</dbReference>
<dbReference type="ProteomicsDB" id="289518">
    <molecule id="Q68FH0-2"/>
</dbReference>
<dbReference type="ProteomicsDB" id="289519">
    <molecule id="Q68FH0-3"/>
</dbReference>
<dbReference type="Antibodypedia" id="33712">
    <property type="antibodies" value="179 antibodies from 29 providers"/>
</dbReference>
<dbReference type="DNASU" id="227937"/>
<dbReference type="Ensembl" id="ENSMUST00000102754.11">
    <molecule id="Q68FH0-1"/>
    <property type="protein sequence ID" value="ENSMUSP00000099815.5"/>
    <property type="gene ID" value="ENSMUSG00000026991.21"/>
</dbReference>
<dbReference type="Ensembl" id="ENSMUST00000168631.8">
    <molecule id="Q68FH0-2"/>
    <property type="protein sequence ID" value="ENSMUSP00000129836.2"/>
    <property type="gene ID" value="ENSMUSG00000026991.21"/>
</dbReference>
<dbReference type="GeneID" id="227937"/>
<dbReference type="KEGG" id="mmu:227937"/>
<dbReference type="UCSC" id="uc008jtb.1">
    <molecule id="Q68FH0-1"/>
    <property type="organism name" value="mouse"/>
</dbReference>
<dbReference type="UCSC" id="uc008jtd.1">
    <molecule id="Q68FH0-2"/>
    <property type="organism name" value="mouse"/>
</dbReference>
<dbReference type="UCSC" id="uc008jtg.1">
    <molecule id="Q68FH0-3"/>
    <property type="organism name" value="mouse"/>
</dbReference>
<dbReference type="AGR" id="MGI:109281"/>
<dbReference type="CTD" id="8502"/>
<dbReference type="MGI" id="MGI:109281">
    <property type="gene designation" value="Pkp4"/>
</dbReference>
<dbReference type="VEuPathDB" id="HostDB:ENSMUSG00000026991"/>
<dbReference type="eggNOG" id="KOG1048">
    <property type="taxonomic scope" value="Eukaryota"/>
</dbReference>
<dbReference type="GeneTree" id="ENSGT00940000155773"/>
<dbReference type="HOGENOM" id="CLU_007897_0_0_1"/>
<dbReference type="InParanoid" id="Q68FH0"/>
<dbReference type="OMA" id="EPRSEYN"/>
<dbReference type="OrthoDB" id="3245100at2759"/>
<dbReference type="PhylomeDB" id="Q68FH0"/>
<dbReference type="TreeFam" id="TF321877"/>
<dbReference type="Reactome" id="R-MMU-6805567">
    <property type="pathway name" value="Keratinization"/>
</dbReference>
<dbReference type="Reactome" id="R-MMU-6809371">
    <property type="pathway name" value="Formation of the cornified envelope"/>
</dbReference>
<dbReference type="Reactome" id="R-MMU-9696264">
    <property type="pathway name" value="RND3 GTPase cycle"/>
</dbReference>
<dbReference type="Reactome" id="R-MMU-9696270">
    <property type="pathway name" value="RND2 GTPase cycle"/>
</dbReference>
<dbReference type="Reactome" id="R-MMU-9696273">
    <property type="pathway name" value="RND1 GTPase cycle"/>
</dbReference>
<dbReference type="BioGRID-ORCS" id="227937">
    <property type="hits" value="4 hits in 77 CRISPR screens"/>
</dbReference>
<dbReference type="CD-CODE" id="CE726F99">
    <property type="entry name" value="Postsynaptic density"/>
</dbReference>
<dbReference type="ChiTaRS" id="Pkp4">
    <property type="organism name" value="mouse"/>
</dbReference>
<dbReference type="PRO" id="PR:Q68FH0"/>
<dbReference type="Proteomes" id="UP000000589">
    <property type="component" value="Chromosome 2"/>
</dbReference>
<dbReference type="RNAct" id="Q68FH0">
    <property type="molecule type" value="protein"/>
</dbReference>
<dbReference type="Bgee" id="ENSMUSG00000026991">
    <property type="expression patterns" value="Expressed in ciliary body and 259 other cell types or tissues"/>
</dbReference>
<dbReference type="ExpressionAtlas" id="Q68FH0">
    <property type="expression patterns" value="baseline and differential"/>
</dbReference>
<dbReference type="GO" id="GO:0044291">
    <property type="term" value="C:cell-cell contact zone"/>
    <property type="evidence" value="ECO:0007669"/>
    <property type="project" value="Ensembl"/>
</dbReference>
<dbReference type="GO" id="GO:0005911">
    <property type="term" value="C:cell-cell junction"/>
    <property type="evidence" value="ECO:0000250"/>
    <property type="project" value="UniProtKB"/>
</dbReference>
<dbReference type="GO" id="GO:0005737">
    <property type="term" value="C:cytoplasm"/>
    <property type="evidence" value="ECO:0000250"/>
    <property type="project" value="UniProtKB"/>
</dbReference>
<dbReference type="GO" id="GO:0009898">
    <property type="term" value="C:cytoplasmic side of plasma membrane"/>
    <property type="evidence" value="ECO:0000250"/>
    <property type="project" value="UniProtKB"/>
</dbReference>
<dbReference type="GO" id="GO:0005856">
    <property type="term" value="C:cytoskeleton"/>
    <property type="evidence" value="ECO:0000250"/>
    <property type="project" value="UniProtKB"/>
</dbReference>
<dbReference type="GO" id="GO:0030057">
    <property type="term" value="C:desmosome"/>
    <property type="evidence" value="ECO:0000250"/>
    <property type="project" value="UniProtKB"/>
</dbReference>
<dbReference type="GO" id="GO:0030496">
    <property type="term" value="C:midbody"/>
    <property type="evidence" value="ECO:0000250"/>
    <property type="project" value="UniProtKB"/>
</dbReference>
<dbReference type="GO" id="GO:0072686">
    <property type="term" value="C:mitotic spindle"/>
    <property type="evidence" value="ECO:0000250"/>
    <property type="project" value="UniProtKB"/>
</dbReference>
<dbReference type="GO" id="GO:0048471">
    <property type="term" value="C:perinuclear region of cytoplasm"/>
    <property type="evidence" value="ECO:0000250"/>
    <property type="project" value="UniProtKB"/>
</dbReference>
<dbReference type="GO" id="GO:0005886">
    <property type="term" value="C:plasma membrane"/>
    <property type="evidence" value="ECO:0000250"/>
    <property type="project" value="UniProtKB"/>
</dbReference>
<dbReference type="GO" id="GO:0014069">
    <property type="term" value="C:postsynaptic density"/>
    <property type="evidence" value="ECO:0000314"/>
    <property type="project" value="MGI"/>
</dbReference>
<dbReference type="GO" id="GO:0051233">
    <property type="term" value="C:spindle midzone"/>
    <property type="evidence" value="ECO:0000250"/>
    <property type="project" value="UniProtKB"/>
</dbReference>
<dbReference type="GO" id="GO:0000922">
    <property type="term" value="C:spindle pole"/>
    <property type="evidence" value="ECO:0000250"/>
    <property type="project" value="UniProtKB"/>
</dbReference>
<dbReference type="GO" id="GO:0098609">
    <property type="term" value="P:cell-cell adhesion"/>
    <property type="evidence" value="ECO:0007669"/>
    <property type="project" value="InterPro"/>
</dbReference>
<dbReference type="GO" id="GO:0007043">
    <property type="term" value="P:cell-cell junction assembly"/>
    <property type="evidence" value="ECO:0000315"/>
    <property type="project" value="UniProtKB"/>
</dbReference>
<dbReference type="GO" id="GO:0032467">
    <property type="term" value="P:positive regulation of cytokinesis"/>
    <property type="evidence" value="ECO:0000250"/>
    <property type="project" value="UniProtKB"/>
</dbReference>
<dbReference type="GO" id="GO:0035023">
    <property type="term" value="P:regulation of Rho protein signal transduction"/>
    <property type="evidence" value="ECO:0000250"/>
    <property type="project" value="UniProtKB"/>
</dbReference>
<dbReference type="FunFam" id="1.25.10.10:FF:000008">
    <property type="entry name" value="plakophilin-4 isoform X1"/>
    <property type="match status" value="1"/>
</dbReference>
<dbReference type="Gene3D" id="1.25.10.10">
    <property type="entry name" value="Leucine-rich Repeat Variant"/>
    <property type="match status" value="1"/>
</dbReference>
<dbReference type="InterPro" id="IPR011989">
    <property type="entry name" value="ARM-like"/>
</dbReference>
<dbReference type="InterPro" id="IPR016024">
    <property type="entry name" value="ARM-type_fold"/>
</dbReference>
<dbReference type="InterPro" id="IPR000225">
    <property type="entry name" value="Armadillo"/>
</dbReference>
<dbReference type="InterPro" id="IPR028435">
    <property type="entry name" value="Plakophilin/d_Catenin"/>
</dbReference>
<dbReference type="PANTHER" id="PTHR10372:SF8">
    <property type="entry name" value="PLAKOPHILIN-4"/>
    <property type="match status" value="1"/>
</dbReference>
<dbReference type="PANTHER" id="PTHR10372">
    <property type="entry name" value="PLAKOPHILLIN-RELATED"/>
    <property type="match status" value="1"/>
</dbReference>
<dbReference type="Pfam" id="PF00514">
    <property type="entry name" value="Arm"/>
    <property type="match status" value="3"/>
</dbReference>
<dbReference type="SMART" id="SM00185">
    <property type="entry name" value="ARM"/>
    <property type="match status" value="7"/>
</dbReference>
<dbReference type="SUPFAM" id="SSF48371">
    <property type="entry name" value="ARM repeat"/>
    <property type="match status" value="1"/>
</dbReference>
<dbReference type="PROSITE" id="PS50176">
    <property type="entry name" value="ARM_REPEAT"/>
    <property type="match status" value="3"/>
</dbReference>
<keyword id="KW-0025">Alternative splicing</keyword>
<keyword id="KW-0130">Cell adhesion</keyword>
<keyword id="KW-0965">Cell junction</keyword>
<keyword id="KW-1003">Cell membrane</keyword>
<keyword id="KW-0175">Coiled coil</keyword>
<keyword id="KW-0963">Cytoplasm</keyword>
<keyword id="KW-0206">Cytoskeleton</keyword>
<keyword id="KW-0472">Membrane</keyword>
<keyword id="KW-0488">Methylation</keyword>
<keyword id="KW-0597">Phosphoprotein</keyword>
<keyword id="KW-1185">Reference proteome</keyword>
<keyword id="KW-0677">Repeat</keyword>
<sequence>MPAPEQGSLVEEGQPQTHQEAVSTGPGMEPETTATTILASVKEQELQFQRLTRELEVERQIVASQLERCRLGAESPSIASTSSTEKSFPWRSTDVPNPGVSKPRVSDTIHPNNYLIRTEPEQGTLYSPEQTSLHESEGSLGNSRSSTQMNSYSDSGYQEAGSFHNSQTVNKADSRQHPFTGSTSNHVVRTSRAEGQTLVQPSVANRAMRRVSSVPSRAQSPSYVTSTGVSPSRGSLRTSLGSGFGSPSVTDSRPLNPSAYSSSTLPAQRAASPYSQRPASPTAVRRVGSVTSRQTSNPNGPVPQYQTTTRVGSPLTLTDAQTRVASPSQGQVGSSSPKRSGMTAVPQHLGPSLQRTVHDMDQFGQQQYDIYERMVPPRPDSLTGLRSSYASQHSQLGQELRSAVSPDLHITPIYEGRTYYSPVYRSPNHGTVELQGSQTALYRTGSVGIGNLQRTSSQRSTLTYQRNNYALNTAATYAEPYRPVQYRVQECSYNRLQHTGPADDGATRSPSIDSIQKDPREFAWRDPELPEVIHMLQHQFPSVQANAAAYLQHLCFGDNKVKMEVYRLGGIKHLVDLLDHRVLEVQKNACGALRNLVFGKSTDENKIAMKNVGGIPALLRLLRKSIDAEVRELVTGVLWNLSSCDAVKMTIIRDALSTLTNTVIVPHSGWNNSSFDDDHKIKFQTSLVLRNTTGCLRNLSSAGEEARKQMRSCEGLVDSLLYVIHTCVNTSDYDSKTVENCVCTLRNLSYRLELEVPQARLLGLNELDDLLGKESPSKDSEPSCWGKKKKKKKRTPQEDQWDGVGPIPGLSKSPKGVEMLWHPSVVKPYLTLLAESSNPATLEGSAGSLQNLSAGNWKFAAYIRAAVRKEKGLPILVELLRMDNDRVVSSVATALRNMALDVRNKELIGKYAMRDLVNRLPGGNGPSILSDETVAAICCALHEVTSKNMENAKALADSGGIEKLVNITKGRGDRSSLKVVKAAAQVLNTLWQYRDLRSIYKKDGWNQNHFITPVSTLERDRFKSHPSLSTTNQQMSPIIQSVGSTSSSPALLGIREPRSEYDRTQPPMQYYNSQGDTTHKGLYPGSSKPSPIYISSYSSPAREQNRRLQHQQLYYQDDSTRKTLDAYRLYLQSPRSYEDPYCDDRVHFPASTDYSTQYGLKSTTNYVDFYSTKRPSYRAEQYPGSPDSWV</sequence>
<organism>
    <name type="scientific">Mus musculus</name>
    <name type="common">Mouse</name>
    <dbReference type="NCBI Taxonomy" id="10090"/>
    <lineage>
        <taxon>Eukaryota</taxon>
        <taxon>Metazoa</taxon>
        <taxon>Chordata</taxon>
        <taxon>Craniata</taxon>
        <taxon>Vertebrata</taxon>
        <taxon>Euteleostomi</taxon>
        <taxon>Mammalia</taxon>
        <taxon>Eutheria</taxon>
        <taxon>Euarchontoglires</taxon>
        <taxon>Glires</taxon>
        <taxon>Rodentia</taxon>
        <taxon>Myomorpha</taxon>
        <taxon>Muroidea</taxon>
        <taxon>Muridae</taxon>
        <taxon>Murinae</taxon>
        <taxon>Mus</taxon>
        <taxon>Mus</taxon>
    </lineage>
</organism>
<protein>
    <recommendedName>
        <fullName>Plakophilin-4</fullName>
    </recommendedName>
    <alternativeName>
        <fullName>Armadillo-related protein</fullName>
    </alternativeName>
</protein>
<proteinExistence type="evidence at protein level"/>
<evidence type="ECO:0000250" key="1"/>
<evidence type="ECO:0000250" key="2">
    <source>
        <dbReference type="UniProtKB" id="Q99569"/>
    </source>
</evidence>
<evidence type="ECO:0000255" key="3"/>
<evidence type="ECO:0000256" key="4">
    <source>
        <dbReference type="SAM" id="MobiDB-lite"/>
    </source>
</evidence>
<evidence type="ECO:0000303" key="5">
    <source>
    </source>
</evidence>
<evidence type="ECO:0000303" key="6">
    <source>
    </source>
</evidence>
<evidence type="ECO:0000305" key="7"/>
<evidence type="ECO:0007744" key="8">
    <source>
    </source>
</evidence>
<evidence type="ECO:0007744" key="9">
    <source>
    </source>
</evidence>
<evidence type="ECO:0007744" key="10">
    <source>
    </source>
</evidence>
<evidence type="ECO:0007744" key="11">
    <source>
    </source>
</evidence>
<accession>Q68FH0</accession>
<accession>A2AS46</accession>
<accession>Q640N0</accession>
<accession>Q68G56</accession>
<accession>Q8BK47</accession>
<accession>Q8BVH1</accession>
<accession>Q9CRE3</accession>